<dbReference type="EC" id="6.1.1.17" evidence="1"/>
<dbReference type="EMBL" id="AE017283">
    <property type="protein sequence ID" value="AAT83592.1"/>
    <property type="molecule type" value="Genomic_DNA"/>
</dbReference>
<dbReference type="RefSeq" id="WP_002516065.1">
    <property type="nucleotide sequence ID" value="NZ_CP025935.1"/>
</dbReference>
<dbReference type="SMR" id="Q6A6M1"/>
<dbReference type="EnsemblBacteria" id="AAT83592">
    <property type="protein sequence ID" value="AAT83592"/>
    <property type="gene ID" value="PPA1869"/>
</dbReference>
<dbReference type="GeneID" id="92857815"/>
<dbReference type="KEGG" id="pac:PPA1869"/>
<dbReference type="eggNOG" id="COG0008">
    <property type="taxonomic scope" value="Bacteria"/>
</dbReference>
<dbReference type="HOGENOM" id="CLU_015768_6_1_11"/>
<dbReference type="Proteomes" id="UP000000603">
    <property type="component" value="Chromosome"/>
</dbReference>
<dbReference type="GO" id="GO:0005829">
    <property type="term" value="C:cytosol"/>
    <property type="evidence" value="ECO:0007669"/>
    <property type="project" value="TreeGrafter"/>
</dbReference>
<dbReference type="GO" id="GO:0005524">
    <property type="term" value="F:ATP binding"/>
    <property type="evidence" value="ECO:0007669"/>
    <property type="project" value="UniProtKB-UniRule"/>
</dbReference>
<dbReference type="GO" id="GO:0004818">
    <property type="term" value="F:glutamate-tRNA ligase activity"/>
    <property type="evidence" value="ECO:0007669"/>
    <property type="project" value="UniProtKB-UniRule"/>
</dbReference>
<dbReference type="GO" id="GO:0000049">
    <property type="term" value="F:tRNA binding"/>
    <property type="evidence" value="ECO:0007669"/>
    <property type="project" value="InterPro"/>
</dbReference>
<dbReference type="GO" id="GO:0008270">
    <property type="term" value="F:zinc ion binding"/>
    <property type="evidence" value="ECO:0007669"/>
    <property type="project" value="InterPro"/>
</dbReference>
<dbReference type="GO" id="GO:0006424">
    <property type="term" value="P:glutamyl-tRNA aminoacylation"/>
    <property type="evidence" value="ECO:0007669"/>
    <property type="project" value="UniProtKB-UniRule"/>
</dbReference>
<dbReference type="CDD" id="cd00808">
    <property type="entry name" value="GluRS_core"/>
    <property type="match status" value="1"/>
</dbReference>
<dbReference type="Gene3D" id="1.10.10.350">
    <property type="match status" value="1"/>
</dbReference>
<dbReference type="Gene3D" id="3.40.50.620">
    <property type="entry name" value="HUPs"/>
    <property type="match status" value="1"/>
</dbReference>
<dbReference type="HAMAP" id="MF_00022">
    <property type="entry name" value="Glu_tRNA_synth_type1"/>
    <property type="match status" value="1"/>
</dbReference>
<dbReference type="InterPro" id="IPR045462">
    <property type="entry name" value="aa-tRNA-synth_I_cd-bd"/>
</dbReference>
<dbReference type="InterPro" id="IPR020751">
    <property type="entry name" value="aa-tRNA-synth_I_codon-bd_sub2"/>
</dbReference>
<dbReference type="InterPro" id="IPR001412">
    <property type="entry name" value="aa-tRNA-synth_I_CS"/>
</dbReference>
<dbReference type="InterPro" id="IPR008925">
    <property type="entry name" value="aa_tRNA-synth_I_cd-bd_sf"/>
</dbReference>
<dbReference type="InterPro" id="IPR004527">
    <property type="entry name" value="Glu-tRNA-ligase_bac/mito"/>
</dbReference>
<dbReference type="InterPro" id="IPR000924">
    <property type="entry name" value="Glu/Gln-tRNA-synth"/>
</dbReference>
<dbReference type="InterPro" id="IPR020058">
    <property type="entry name" value="Glu/Gln-tRNA-synth_Ib_cat-dom"/>
</dbReference>
<dbReference type="InterPro" id="IPR049940">
    <property type="entry name" value="GluQ/Sye"/>
</dbReference>
<dbReference type="InterPro" id="IPR033910">
    <property type="entry name" value="GluRS_core"/>
</dbReference>
<dbReference type="InterPro" id="IPR014729">
    <property type="entry name" value="Rossmann-like_a/b/a_fold"/>
</dbReference>
<dbReference type="NCBIfam" id="TIGR00464">
    <property type="entry name" value="gltX_bact"/>
    <property type="match status" value="1"/>
</dbReference>
<dbReference type="PANTHER" id="PTHR43311">
    <property type="entry name" value="GLUTAMATE--TRNA LIGASE"/>
    <property type="match status" value="1"/>
</dbReference>
<dbReference type="PANTHER" id="PTHR43311:SF2">
    <property type="entry name" value="GLUTAMATE--TRNA LIGASE, MITOCHONDRIAL-RELATED"/>
    <property type="match status" value="1"/>
</dbReference>
<dbReference type="Pfam" id="PF19269">
    <property type="entry name" value="Anticodon_2"/>
    <property type="match status" value="1"/>
</dbReference>
<dbReference type="Pfam" id="PF00749">
    <property type="entry name" value="tRNA-synt_1c"/>
    <property type="match status" value="1"/>
</dbReference>
<dbReference type="PRINTS" id="PR00987">
    <property type="entry name" value="TRNASYNTHGLU"/>
</dbReference>
<dbReference type="SUPFAM" id="SSF48163">
    <property type="entry name" value="An anticodon-binding domain of class I aminoacyl-tRNA synthetases"/>
    <property type="match status" value="1"/>
</dbReference>
<dbReference type="SUPFAM" id="SSF52374">
    <property type="entry name" value="Nucleotidylyl transferase"/>
    <property type="match status" value="1"/>
</dbReference>
<dbReference type="PROSITE" id="PS00178">
    <property type="entry name" value="AA_TRNA_LIGASE_I"/>
    <property type="match status" value="1"/>
</dbReference>
<reference key="1">
    <citation type="journal article" date="2004" name="Science">
        <title>The complete genome sequence of Propionibacterium acnes, a commensal of human skin.</title>
        <authorList>
            <person name="Brueggemann H."/>
            <person name="Henne A."/>
            <person name="Hoster F."/>
            <person name="Liesegang H."/>
            <person name="Wiezer A."/>
            <person name="Strittmatter A."/>
            <person name="Hujer S."/>
            <person name="Duerre P."/>
            <person name="Gottschalk G."/>
        </authorList>
    </citation>
    <scope>NUCLEOTIDE SEQUENCE [LARGE SCALE GENOMIC DNA]</scope>
    <source>
        <strain>DSM 16379 / KPA171202</strain>
    </source>
</reference>
<gene>
    <name evidence="1" type="primary">gltX</name>
    <name type="ordered locus">PPA1869</name>
</gene>
<organism>
    <name type="scientific">Cutibacterium acnes (strain DSM 16379 / KPA171202)</name>
    <name type="common">Propionibacterium acnes</name>
    <dbReference type="NCBI Taxonomy" id="267747"/>
    <lineage>
        <taxon>Bacteria</taxon>
        <taxon>Bacillati</taxon>
        <taxon>Actinomycetota</taxon>
        <taxon>Actinomycetes</taxon>
        <taxon>Propionibacteriales</taxon>
        <taxon>Propionibacteriaceae</taxon>
        <taxon>Cutibacterium</taxon>
    </lineage>
</organism>
<protein>
    <recommendedName>
        <fullName evidence="1">Glutamate--tRNA ligase</fullName>
        <ecNumber evidence="1">6.1.1.17</ecNumber>
    </recommendedName>
    <alternativeName>
        <fullName evidence="1">Glutamyl-tRNA synthetase</fullName>
        <shortName evidence="1">GluRS</shortName>
    </alternativeName>
</protein>
<sequence>MTDLHPARTRVAPSPTGDPHVGTAYMALFDKAWAQRTGGQFVLRIEDTDRTRLVADSEDQIYQTLEWLGLSPDESPLVGGPYEPYKQSERLDTYKPLVEKLIESGHAYRCWCSQERLKQLREERAAAKSPETGYDRMCLGMSKEERAKLPGFTETPVVRMLIPEDVDLEFDDLIRGTVRAPRPDDQVILKADGFPTYHMAVVVDDHLMGIDTVVRGEEWISSTPKHLLLYKWLGWEAPKFAHMPLLRNTDKSKISKRKNPAARLMWFREQGYLPEALRNFLQLLAYPTVAEGQEMEDFDSFVSRFDWGNVSTGGPVFDVTKLDWLNGQYIRSLDAEVLTDRVLDYADQMCQARHVLGRDLTQEDRCVIHAAMPLVRERLTLLSEALPKLAFLLTDDDALVFDEDSVAKLKAGADDIQHAAVEVLKGLDDFSADAIQAALRARLCDEMGIKPRLAFAPVRVAVTGSRVSPPLFEAMEILGKESTLRRMQRFEAEIDQK</sequence>
<keyword id="KW-0030">Aminoacyl-tRNA synthetase</keyword>
<keyword id="KW-0067">ATP-binding</keyword>
<keyword id="KW-0963">Cytoplasm</keyword>
<keyword id="KW-0436">Ligase</keyword>
<keyword id="KW-0547">Nucleotide-binding</keyword>
<keyword id="KW-0648">Protein biosynthesis</keyword>
<name>SYE_CUTAK</name>
<feature type="chain" id="PRO_0000119623" description="Glutamate--tRNA ligase">
    <location>
        <begin position="1"/>
        <end position="497"/>
    </location>
</feature>
<feature type="short sequence motif" description="'HIGH' region" evidence="1">
    <location>
        <begin position="13"/>
        <end position="23"/>
    </location>
</feature>
<feature type="short sequence motif" description="'KMSKS' region" evidence="1">
    <location>
        <begin position="253"/>
        <end position="257"/>
    </location>
</feature>
<feature type="binding site" evidence="1">
    <location>
        <position position="256"/>
    </location>
    <ligand>
        <name>ATP</name>
        <dbReference type="ChEBI" id="CHEBI:30616"/>
    </ligand>
</feature>
<evidence type="ECO:0000255" key="1">
    <source>
        <dbReference type="HAMAP-Rule" id="MF_00022"/>
    </source>
</evidence>
<accession>Q6A6M1</accession>
<comment type="function">
    <text evidence="1">Catalyzes the attachment of glutamate to tRNA(Glu) in a two-step reaction: glutamate is first activated by ATP to form Glu-AMP and then transferred to the acceptor end of tRNA(Glu).</text>
</comment>
<comment type="catalytic activity">
    <reaction evidence="1">
        <text>tRNA(Glu) + L-glutamate + ATP = L-glutamyl-tRNA(Glu) + AMP + diphosphate</text>
        <dbReference type="Rhea" id="RHEA:23540"/>
        <dbReference type="Rhea" id="RHEA-COMP:9663"/>
        <dbReference type="Rhea" id="RHEA-COMP:9680"/>
        <dbReference type="ChEBI" id="CHEBI:29985"/>
        <dbReference type="ChEBI" id="CHEBI:30616"/>
        <dbReference type="ChEBI" id="CHEBI:33019"/>
        <dbReference type="ChEBI" id="CHEBI:78442"/>
        <dbReference type="ChEBI" id="CHEBI:78520"/>
        <dbReference type="ChEBI" id="CHEBI:456215"/>
        <dbReference type="EC" id="6.1.1.17"/>
    </reaction>
</comment>
<comment type="subunit">
    <text evidence="1">Monomer.</text>
</comment>
<comment type="subcellular location">
    <subcellularLocation>
        <location evidence="1">Cytoplasm</location>
    </subcellularLocation>
</comment>
<comment type="similarity">
    <text evidence="1">Belongs to the class-I aminoacyl-tRNA synthetase family. Glutamate--tRNA ligase type 1 subfamily.</text>
</comment>
<proteinExistence type="inferred from homology"/>